<comment type="function">
    <text evidence="1">DNA-dependent RNA polymerase catalyzes the transcription of DNA into RNA using the four ribonucleoside triphosphates as substrates.</text>
</comment>
<comment type="catalytic activity">
    <reaction evidence="1">
        <text>RNA(n) + a ribonucleoside 5'-triphosphate = RNA(n+1) + diphosphate</text>
        <dbReference type="Rhea" id="RHEA:21248"/>
        <dbReference type="Rhea" id="RHEA-COMP:14527"/>
        <dbReference type="Rhea" id="RHEA-COMP:17342"/>
        <dbReference type="ChEBI" id="CHEBI:33019"/>
        <dbReference type="ChEBI" id="CHEBI:61557"/>
        <dbReference type="ChEBI" id="CHEBI:140395"/>
        <dbReference type="EC" id="2.7.7.6"/>
    </reaction>
</comment>
<comment type="cofactor">
    <cofactor evidence="1">
        <name>Mg(2+)</name>
        <dbReference type="ChEBI" id="CHEBI:18420"/>
    </cofactor>
    <text evidence="1">Binds 1 Mg(2+) ion per subunit.</text>
</comment>
<comment type="cofactor">
    <cofactor evidence="1">
        <name>Zn(2+)</name>
        <dbReference type="ChEBI" id="CHEBI:29105"/>
    </cofactor>
    <text evidence="1">Binds 2 Zn(2+) ions per subunit.</text>
</comment>
<comment type="subunit">
    <text evidence="1">The RNAP catalytic core consists of 2 alpha, 1 beta, 1 beta' and 1 omega subunit. When a sigma factor is associated with the core the holoenzyme is formed, which can initiate transcription.</text>
</comment>
<comment type="similarity">
    <text evidence="1">Belongs to the RNA polymerase beta' chain family.</text>
</comment>
<organism>
    <name type="scientific">Halorhodospira halophila (strain DSM 244 / SL1)</name>
    <name type="common">Ectothiorhodospira halophila (strain DSM 244 / SL1)</name>
    <dbReference type="NCBI Taxonomy" id="349124"/>
    <lineage>
        <taxon>Bacteria</taxon>
        <taxon>Pseudomonadati</taxon>
        <taxon>Pseudomonadota</taxon>
        <taxon>Gammaproteobacteria</taxon>
        <taxon>Chromatiales</taxon>
        <taxon>Ectothiorhodospiraceae</taxon>
        <taxon>Halorhodospira</taxon>
    </lineage>
</organism>
<gene>
    <name evidence="1" type="primary">rpoC</name>
    <name type="ordered locus">Hhal_0864</name>
</gene>
<reference key="1">
    <citation type="submission" date="2006-12" db="EMBL/GenBank/DDBJ databases">
        <title>Complete sequence of Halorhodospira halophila SL1.</title>
        <authorList>
            <consortium name="US DOE Joint Genome Institute"/>
            <person name="Copeland A."/>
            <person name="Lucas S."/>
            <person name="Lapidus A."/>
            <person name="Barry K."/>
            <person name="Detter J.C."/>
            <person name="Glavina del Rio T."/>
            <person name="Hammon N."/>
            <person name="Israni S."/>
            <person name="Dalin E."/>
            <person name="Tice H."/>
            <person name="Pitluck S."/>
            <person name="Saunders E."/>
            <person name="Brettin T."/>
            <person name="Bruce D."/>
            <person name="Han C."/>
            <person name="Tapia R."/>
            <person name="Schmutz J."/>
            <person name="Larimer F."/>
            <person name="Land M."/>
            <person name="Hauser L."/>
            <person name="Kyrpides N."/>
            <person name="Mikhailova N."/>
            <person name="Hoff W."/>
            <person name="Richardson P."/>
        </authorList>
    </citation>
    <scope>NUCLEOTIDE SEQUENCE [LARGE SCALE GENOMIC DNA]</scope>
    <source>
        <strain>DSM 244 / SL1</strain>
    </source>
</reference>
<name>RPOC_HALHL</name>
<proteinExistence type="inferred from homology"/>
<accession>A1WVC8</accession>
<keyword id="KW-0240">DNA-directed RNA polymerase</keyword>
<keyword id="KW-0460">Magnesium</keyword>
<keyword id="KW-0479">Metal-binding</keyword>
<keyword id="KW-0548">Nucleotidyltransferase</keyword>
<keyword id="KW-1185">Reference proteome</keyword>
<keyword id="KW-0804">Transcription</keyword>
<keyword id="KW-0808">Transferase</keyword>
<keyword id="KW-0862">Zinc</keyword>
<evidence type="ECO:0000255" key="1">
    <source>
        <dbReference type="HAMAP-Rule" id="MF_01322"/>
    </source>
</evidence>
<evidence type="ECO:0000256" key="2">
    <source>
        <dbReference type="SAM" id="MobiDB-lite"/>
    </source>
</evidence>
<protein>
    <recommendedName>
        <fullName evidence="1">DNA-directed RNA polymerase subunit beta'</fullName>
        <shortName evidence="1">RNAP subunit beta'</shortName>
        <ecNumber evidence="1">2.7.7.6</ecNumber>
    </recommendedName>
    <alternativeName>
        <fullName evidence="1">RNA polymerase subunit beta'</fullName>
    </alternativeName>
    <alternativeName>
        <fullName evidence="1">Transcriptase subunit beta'</fullName>
    </alternativeName>
</protein>
<feature type="chain" id="PRO_0000308837" description="DNA-directed RNA polymerase subunit beta'">
    <location>
        <begin position="1"/>
        <end position="1430"/>
    </location>
</feature>
<feature type="region of interest" description="Disordered" evidence="2">
    <location>
        <begin position="1388"/>
        <end position="1430"/>
    </location>
</feature>
<feature type="compositionally biased region" description="Low complexity" evidence="2">
    <location>
        <begin position="1392"/>
        <end position="1405"/>
    </location>
</feature>
<feature type="binding site" evidence="1">
    <location>
        <position position="71"/>
    </location>
    <ligand>
        <name>Zn(2+)</name>
        <dbReference type="ChEBI" id="CHEBI:29105"/>
        <label>1</label>
    </ligand>
</feature>
<feature type="binding site" evidence="1">
    <location>
        <position position="73"/>
    </location>
    <ligand>
        <name>Zn(2+)</name>
        <dbReference type="ChEBI" id="CHEBI:29105"/>
        <label>1</label>
    </ligand>
</feature>
<feature type="binding site" evidence="1">
    <location>
        <position position="86"/>
    </location>
    <ligand>
        <name>Zn(2+)</name>
        <dbReference type="ChEBI" id="CHEBI:29105"/>
        <label>1</label>
    </ligand>
</feature>
<feature type="binding site" evidence="1">
    <location>
        <position position="89"/>
    </location>
    <ligand>
        <name>Zn(2+)</name>
        <dbReference type="ChEBI" id="CHEBI:29105"/>
        <label>1</label>
    </ligand>
</feature>
<feature type="binding site" evidence="1">
    <location>
        <position position="461"/>
    </location>
    <ligand>
        <name>Mg(2+)</name>
        <dbReference type="ChEBI" id="CHEBI:18420"/>
    </ligand>
</feature>
<feature type="binding site" evidence="1">
    <location>
        <position position="463"/>
    </location>
    <ligand>
        <name>Mg(2+)</name>
        <dbReference type="ChEBI" id="CHEBI:18420"/>
    </ligand>
</feature>
<feature type="binding site" evidence="1">
    <location>
        <position position="465"/>
    </location>
    <ligand>
        <name>Mg(2+)</name>
        <dbReference type="ChEBI" id="CHEBI:18420"/>
    </ligand>
</feature>
<feature type="binding site" evidence="1">
    <location>
        <position position="815"/>
    </location>
    <ligand>
        <name>Zn(2+)</name>
        <dbReference type="ChEBI" id="CHEBI:29105"/>
        <label>2</label>
    </ligand>
</feature>
<feature type="binding site" evidence="1">
    <location>
        <position position="889"/>
    </location>
    <ligand>
        <name>Zn(2+)</name>
        <dbReference type="ChEBI" id="CHEBI:29105"/>
        <label>2</label>
    </ligand>
</feature>
<feature type="binding site" evidence="1">
    <location>
        <position position="896"/>
    </location>
    <ligand>
        <name>Zn(2+)</name>
        <dbReference type="ChEBI" id="CHEBI:29105"/>
        <label>2</label>
    </ligand>
</feature>
<feature type="binding site" evidence="1">
    <location>
        <position position="899"/>
    </location>
    <ligand>
        <name>Zn(2+)</name>
        <dbReference type="ChEBI" id="CHEBI:29105"/>
        <label>2</label>
    </ligand>
</feature>
<sequence>MRDLLNLFKQPGAQLEDFDAIRIGLASPEMIRSWSYGEVKKPETINYRTFKPERDGLFCAKIFGPVKDYECLCGKYKRLKHRGVVCEKCGVEVTVAKVRRERMGHIDLASPVAHIWFLKSLPSRIGLLLDMTLRDVERVLYFEAYIVIEPGMTPLEQGQLLTDEQYLEAVEEHGDEFDARMGAEAVLEILKGMDLEAEARRLRDDIEATGSESKIKRLSKRLKLLEAFLESGNKPEWLIMTVLPVLPPDLRPLVPLDGGRFATSDLNDLYRRVINRNNRLKRLLELAAPDIIVRNEKRMLQESVDALLDNGRRGRAITGTNKRPLKSLADMIKGKQGRFRQNLLGKRVDYSGRSVIVVGPTLRLHQCGLPKRMALELFKPFIFSKLQRRGLATTIKAAKKMVERETGEVWDILDEVIREHPVLLNRAPTLHRLGIQAFEPVLIEGKAIQLHPLVCTAYNADFDGDQMAVHVPLSLEAQLESRAMMMSTNNILSPASGEPIIVPSQDVVLGIYYMTRERVNARGEGMRLAGVEEVHRAYQTGAAELGARVEVRIRERVFDDSGEMVERVQRRQTTIGRALLFDIVPDGLPFEAVDRELDKKGVSGLVNACYRRVGLKGTVVFADQLMYTGFFYSTKAGVSIGVDDMEVPTDKEEALRSAEEEVREIEDQYASGLVTSGERYNKVVDIWAHTNDQVAGAMMEKMGKETVVDAEGNETEQKSLNSIFIMADSGARGSAAQIRQLAGMRGLMAKPDGSIIETPITANFREGLNVLQYFISTHGARKGLADTALKTANSGYLTRRLVDVSQDLVVTEEDCGTTDGLVQTPIIEGGDVVETLAERVLGRVVAEDVAVPGSTDIAVEAGTLLDEDWVERLERMGVDEIKVRSAVTCETRHGVCAKCYGRDLARGHGVNIGEAVGVIAAQSIGEPGTQLTMRTFHIGGAASRAAAVSQVEVRNTGKARLHNIKTVQHHSGSYVAVSRSGELTVMDEYGRERERYKIPYGAVLSVGDEDPVEAGQVVANWDPHTHPIVTEVDGYVRFHDFVEGVTVQREVDEVTGLSSLVVTDPKSRGTGEHKRQVTNANGKVTEERVAYKDLRPMIKLVDGDGNDLNIAGTQIPAHYYLPAGAIVSLEDNAEVRVGDALARIPQEASKTRDITGGLPRVADLFEARKPKEPAILAEASGTVGFGKETKGKQRLIITKADGETHEELIPKWRNVTVFEGEHVEKGETIADGEPNPHDILRLLGVTKLAEYIVQEIQDVFRLQGVGINDKHIEVIVRQMLRKTIVSDPGDSLHLKGEQVDRAKLLEENEQLQAQDKQPAQWEPSLLGITKASLSTESFISAASFQETTRVLTEAATRGIRDDLRGLKENVIVGRLIPAGTGFAYHAARRQEAPAPAATPEQQAEEVFASLGQGEGEGPSPSDEASGPEVE</sequence>
<dbReference type="EC" id="2.7.7.6" evidence="1"/>
<dbReference type="EMBL" id="CP000544">
    <property type="protein sequence ID" value="ABM61640.1"/>
    <property type="molecule type" value="Genomic_DNA"/>
</dbReference>
<dbReference type="SMR" id="A1WVC8"/>
<dbReference type="STRING" id="349124.Hhal_0864"/>
<dbReference type="KEGG" id="hha:Hhal_0864"/>
<dbReference type="eggNOG" id="COG0086">
    <property type="taxonomic scope" value="Bacteria"/>
</dbReference>
<dbReference type="HOGENOM" id="CLU_000524_3_1_6"/>
<dbReference type="OrthoDB" id="9815296at2"/>
<dbReference type="Proteomes" id="UP000000647">
    <property type="component" value="Chromosome"/>
</dbReference>
<dbReference type="GO" id="GO:0000428">
    <property type="term" value="C:DNA-directed RNA polymerase complex"/>
    <property type="evidence" value="ECO:0007669"/>
    <property type="project" value="UniProtKB-KW"/>
</dbReference>
<dbReference type="GO" id="GO:0003677">
    <property type="term" value="F:DNA binding"/>
    <property type="evidence" value="ECO:0007669"/>
    <property type="project" value="UniProtKB-UniRule"/>
</dbReference>
<dbReference type="GO" id="GO:0003899">
    <property type="term" value="F:DNA-directed RNA polymerase activity"/>
    <property type="evidence" value="ECO:0007669"/>
    <property type="project" value="UniProtKB-UniRule"/>
</dbReference>
<dbReference type="GO" id="GO:0000287">
    <property type="term" value="F:magnesium ion binding"/>
    <property type="evidence" value="ECO:0007669"/>
    <property type="project" value="UniProtKB-UniRule"/>
</dbReference>
<dbReference type="GO" id="GO:0008270">
    <property type="term" value="F:zinc ion binding"/>
    <property type="evidence" value="ECO:0007669"/>
    <property type="project" value="UniProtKB-UniRule"/>
</dbReference>
<dbReference type="GO" id="GO:0006351">
    <property type="term" value="P:DNA-templated transcription"/>
    <property type="evidence" value="ECO:0007669"/>
    <property type="project" value="UniProtKB-UniRule"/>
</dbReference>
<dbReference type="CDD" id="cd02655">
    <property type="entry name" value="RNAP_beta'_C"/>
    <property type="match status" value="1"/>
</dbReference>
<dbReference type="CDD" id="cd01609">
    <property type="entry name" value="RNAP_beta'_N"/>
    <property type="match status" value="1"/>
</dbReference>
<dbReference type="FunFam" id="1.10.132.30:FF:000003">
    <property type="entry name" value="DNA-directed RNA polymerase subunit beta"/>
    <property type="match status" value="1"/>
</dbReference>
<dbReference type="FunFam" id="1.10.150.390:FF:000002">
    <property type="entry name" value="DNA-directed RNA polymerase subunit beta"/>
    <property type="match status" value="1"/>
</dbReference>
<dbReference type="FunFam" id="1.10.40.90:FF:000001">
    <property type="entry name" value="DNA-directed RNA polymerase subunit beta"/>
    <property type="match status" value="1"/>
</dbReference>
<dbReference type="FunFam" id="4.10.860.120:FF:000001">
    <property type="entry name" value="DNA-directed RNA polymerase subunit beta"/>
    <property type="match status" value="1"/>
</dbReference>
<dbReference type="Gene3D" id="1.10.132.30">
    <property type="match status" value="1"/>
</dbReference>
<dbReference type="Gene3D" id="1.10.150.390">
    <property type="match status" value="1"/>
</dbReference>
<dbReference type="Gene3D" id="1.10.1790.20">
    <property type="match status" value="1"/>
</dbReference>
<dbReference type="Gene3D" id="1.10.40.90">
    <property type="match status" value="1"/>
</dbReference>
<dbReference type="Gene3D" id="2.40.40.20">
    <property type="match status" value="1"/>
</dbReference>
<dbReference type="Gene3D" id="2.40.50.100">
    <property type="match status" value="3"/>
</dbReference>
<dbReference type="Gene3D" id="4.10.860.120">
    <property type="entry name" value="RNA polymerase II, clamp domain"/>
    <property type="match status" value="1"/>
</dbReference>
<dbReference type="Gene3D" id="1.10.274.100">
    <property type="entry name" value="RNA polymerase Rpb1, domain 3"/>
    <property type="match status" value="1"/>
</dbReference>
<dbReference type="HAMAP" id="MF_01322">
    <property type="entry name" value="RNApol_bact_RpoC"/>
    <property type="match status" value="1"/>
</dbReference>
<dbReference type="InterPro" id="IPR045867">
    <property type="entry name" value="DNA-dir_RpoC_beta_prime"/>
</dbReference>
<dbReference type="InterPro" id="IPR012754">
    <property type="entry name" value="DNA-dir_RpoC_beta_prime_bact"/>
</dbReference>
<dbReference type="InterPro" id="IPR000722">
    <property type="entry name" value="RNA_pol_asu"/>
</dbReference>
<dbReference type="InterPro" id="IPR006592">
    <property type="entry name" value="RNA_pol_N"/>
</dbReference>
<dbReference type="InterPro" id="IPR007080">
    <property type="entry name" value="RNA_pol_Rpb1_1"/>
</dbReference>
<dbReference type="InterPro" id="IPR007066">
    <property type="entry name" value="RNA_pol_Rpb1_3"/>
</dbReference>
<dbReference type="InterPro" id="IPR042102">
    <property type="entry name" value="RNA_pol_Rpb1_3_sf"/>
</dbReference>
<dbReference type="InterPro" id="IPR007083">
    <property type="entry name" value="RNA_pol_Rpb1_4"/>
</dbReference>
<dbReference type="InterPro" id="IPR007081">
    <property type="entry name" value="RNA_pol_Rpb1_5"/>
</dbReference>
<dbReference type="InterPro" id="IPR044893">
    <property type="entry name" value="RNA_pol_Rpb1_clamp_domain"/>
</dbReference>
<dbReference type="InterPro" id="IPR038120">
    <property type="entry name" value="Rpb1_funnel_sf"/>
</dbReference>
<dbReference type="NCBIfam" id="TIGR02386">
    <property type="entry name" value="rpoC_TIGR"/>
    <property type="match status" value="1"/>
</dbReference>
<dbReference type="PANTHER" id="PTHR19376">
    <property type="entry name" value="DNA-DIRECTED RNA POLYMERASE"/>
    <property type="match status" value="1"/>
</dbReference>
<dbReference type="PANTHER" id="PTHR19376:SF54">
    <property type="entry name" value="DNA-DIRECTED RNA POLYMERASE SUBUNIT BETA"/>
    <property type="match status" value="1"/>
</dbReference>
<dbReference type="Pfam" id="PF04997">
    <property type="entry name" value="RNA_pol_Rpb1_1"/>
    <property type="match status" value="1"/>
</dbReference>
<dbReference type="Pfam" id="PF00623">
    <property type="entry name" value="RNA_pol_Rpb1_2"/>
    <property type="match status" value="1"/>
</dbReference>
<dbReference type="Pfam" id="PF04983">
    <property type="entry name" value="RNA_pol_Rpb1_3"/>
    <property type="match status" value="1"/>
</dbReference>
<dbReference type="Pfam" id="PF05000">
    <property type="entry name" value="RNA_pol_Rpb1_4"/>
    <property type="match status" value="1"/>
</dbReference>
<dbReference type="Pfam" id="PF04998">
    <property type="entry name" value="RNA_pol_Rpb1_5"/>
    <property type="match status" value="1"/>
</dbReference>
<dbReference type="SMART" id="SM00663">
    <property type="entry name" value="RPOLA_N"/>
    <property type="match status" value="1"/>
</dbReference>
<dbReference type="SUPFAM" id="SSF64484">
    <property type="entry name" value="beta and beta-prime subunits of DNA dependent RNA-polymerase"/>
    <property type="match status" value="1"/>
</dbReference>